<accession>B2A2Z8</accession>
<gene>
    <name evidence="1" type="primary">serS</name>
    <name type="ordered locus">Nther_0013</name>
</gene>
<feature type="chain" id="PRO_1000098099" description="Serine--tRNA ligase">
    <location>
        <begin position="1"/>
        <end position="422"/>
    </location>
</feature>
<feature type="binding site" evidence="1">
    <location>
        <begin position="229"/>
        <end position="231"/>
    </location>
    <ligand>
        <name>L-serine</name>
        <dbReference type="ChEBI" id="CHEBI:33384"/>
    </ligand>
</feature>
<feature type="binding site" evidence="1">
    <location>
        <begin position="260"/>
        <end position="262"/>
    </location>
    <ligand>
        <name>ATP</name>
        <dbReference type="ChEBI" id="CHEBI:30616"/>
    </ligand>
</feature>
<feature type="binding site" evidence="1">
    <location>
        <position position="283"/>
    </location>
    <ligand>
        <name>L-serine</name>
        <dbReference type="ChEBI" id="CHEBI:33384"/>
    </ligand>
</feature>
<feature type="binding site" evidence="1">
    <location>
        <begin position="347"/>
        <end position="350"/>
    </location>
    <ligand>
        <name>ATP</name>
        <dbReference type="ChEBI" id="CHEBI:30616"/>
    </ligand>
</feature>
<feature type="binding site" evidence="1">
    <location>
        <position position="383"/>
    </location>
    <ligand>
        <name>L-serine</name>
        <dbReference type="ChEBI" id="CHEBI:33384"/>
    </ligand>
</feature>
<organism>
    <name type="scientific">Natranaerobius thermophilus (strain ATCC BAA-1301 / DSM 18059 / JW/NM-WN-LF)</name>
    <dbReference type="NCBI Taxonomy" id="457570"/>
    <lineage>
        <taxon>Bacteria</taxon>
        <taxon>Bacillati</taxon>
        <taxon>Bacillota</taxon>
        <taxon>Clostridia</taxon>
        <taxon>Natranaerobiales</taxon>
        <taxon>Natranaerobiaceae</taxon>
        <taxon>Natranaerobius</taxon>
    </lineage>
</organism>
<evidence type="ECO:0000255" key="1">
    <source>
        <dbReference type="HAMAP-Rule" id="MF_00176"/>
    </source>
</evidence>
<reference key="1">
    <citation type="submission" date="2008-04" db="EMBL/GenBank/DDBJ databases">
        <title>Complete sequence of chromosome of Natranaerobius thermophilus JW/NM-WN-LF.</title>
        <authorList>
            <consortium name="US DOE Joint Genome Institute"/>
            <person name="Copeland A."/>
            <person name="Lucas S."/>
            <person name="Lapidus A."/>
            <person name="Glavina del Rio T."/>
            <person name="Dalin E."/>
            <person name="Tice H."/>
            <person name="Bruce D."/>
            <person name="Goodwin L."/>
            <person name="Pitluck S."/>
            <person name="Chertkov O."/>
            <person name="Brettin T."/>
            <person name="Detter J.C."/>
            <person name="Han C."/>
            <person name="Kuske C.R."/>
            <person name="Schmutz J."/>
            <person name="Larimer F."/>
            <person name="Land M."/>
            <person name="Hauser L."/>
            <person name="Kyrpides N."/>
            <person name="Lykidis A."/>
            <person name="Mesbah N.M."/>
            <person name="Wiegel J."/>
        </authorList>
    </citation>
    <scope>NUCLEOTIDE SEQUENCE [LARGE SCALE GENOMIC DNA]</scope>
    <source>
        <strain>ATCC BAA-1301 / DSM 18059 / JW/NM-WN-LF</strain>
    </source>
</reference>
<proteinExistence type="inferred from homology"/>
<comment type="function">
    <text evidence="1">Catalyzes the attachment of serine to tRNA(Ser). Is also able to aminoacylate tRNA(Sec) with serine, to form the misacylated tRNA L-seryl-tRNA(Sec), which will be further converted into selenocysteinyl-tRNA(Sec).</text>
</comment>
<comment type="catalytic activity">
    <reaction evidence="1">
        <text>tRNA(Ser) + L-serine + ATP = L-seryl-tRNA(Ser) + AMP + diphosphate + H(+)</text>
        <dbReference type="Rhea" id="RHEA:12292"/>
        <dbReference type="Rhea" id="RHEA-COMP:9669"/>
        <dbReference type="Rhea" id="RHEA-COMP:9703"/>
        <dbReference type="ChEBI" id="CHEBI:15378"/>
        <dbReference type="ChEBI" id="CHEBI:30616"/>
        <dbReference type="ChEBI" id="CHEBI:33019"/>
        <dbReference type="ChEBI" id="CHEBI:33384"/>
        <dbReference type="ChEBI" id="CHEBI:78442"/>
        <dbReference type="ChEBI" id="CHEBI:78533"/>
        <dbReference type="ChEBI" id="CHEBI:456215"/>
        <dbReference type="EC" id="6.1.1.11"/>
    </reaction>
</comment>
<comment type="catalytic activity">
    <reaction evidence="1">
        <text>tRNA(Sec) + L-serine + ATP = L-seryl-tRNA(Sec) + AMP + diphosphate + H(+)</text>
        <dbReference type="Rhea" id="RHEA:42580"/>
        <dbReference type="Rhea" id="RHEA-COMP:9742"/>
        <dbReference type="Rhea" id="RHEA-COMP:10128"/>
        <dbReference type="ChEBI" id="CHEBI:15378"/>
        <dbReference type="ChEBI" id="CHEBI:30616"/>
        <dbReference type="ChEBI" id="CHEBI:33019"/>
        <dbReference type="ChEBI" id="CHEBI:33384"/>
        <dbReference type="ChEBI" id="CHEBI:78442"/>
        <dbReference type="ChEBI" id="CHEBI:78533"/>
        <dbReference type="ChEBI" id="CHEBI:456215"/>
        <dbReference type="EC" id="6.1.1.11"/>
    </reaction>
</comment>
<comment type="pathway">
    <text evidence="1">Aminoacyl-tRNA biosynthesis; selenocysteinyl-tRNA(Sec) biosynthesis; L-seryl-tRNA(Sec) from L-serine and tRNA(Sec): step 1/1.</text>
</comment>
<comment type="subunit">
    <text evidence="1">Homodimer. The tRNA molecule binds across the dimer.</text>
</comment>
<comment type="subcellular location">
    <subcellularLocation>
        <location evidence="1">Cytoplasm</location>
    </subcellularLocation>
</comment>
<comment type="domain">
    <text evidence="1">Consists of two distinct domains, a catalytic core and a N-terminal extension that is involved in tRNA binding.</text>
</comment>
<comment type="similarity">
    <text evidence="1">Belongs to the class-II aminoacyl-tRNA synthetase family. Type-1 seryl-tRNA synthetase subfamily.</text>
</comment>
<name>SYS_NATTJ</name>
<protein>
    <recommendedName>
        <fullName evidence="1">Serine--tRNA ligase</fullName>
        <ecNumber evidence="1">6.1.1.11</ecNumber>
    </recommendedName>
    <alternativeName>
        <fullName evidence="1">Seryl-tRNA synthetase</fullName>
        <shortName evidence="1">SerRS</shortName>
    </alternativeName>
    <alternativeName>
        <fullName evidence="1">Seryl-tRNA(Ser/Sec) synthetase</fullName>
    </alternativeName>
</protein>
<dbReference type="EC" id="6.1.1.11" evidence="1"/>
<dbReference type="EMBL" id="CP001034">
    <property type="protein sequence ID" value="ACB83612.1"/>
    <property type="molecule type" value="Genomic_DNA"/>
</dbReference>
<dbReference type="RefSeq" id="WP_012446503.1">
    <property type="nucleotide sequence ID" value="NC_010718.1"/>
</dbReference>
<dbReference type="SMR" id="B2A2Z8"/>
<dbReference type="FunCoup" id="B2A2Z8">
    <property type="interactions" value="418"/>
</dbReference>
<dbReference type="STRING" id="457570.Nther_0013"/>
<dbReference type="KEGG" id="nth:Nther_0013"/>
<dbReference type="eggNOG" id="COG0172">
    <property type="taxonomic scope" value="Bacteria"/>
</dbReference>
<dbReference type="HOGENOM" id="CLU_023797_1_1_9"/>
<dbReference type="InParanoid" id="B2A2Z8"/>
<dbReference type="OrthoDB" id="9804647at2"/>
<dbReference type="UniPathway" id="UPA00906">
    <property type="reaction ID" value="UER00895"/>
</dbReference>
<dbReference type="Proteomes" id="UP000001683">
    <property type="component" value="Chromosome"/>
</dbReference>
<dbReference type="GO" id="GO:0005737">
    <property type="term" value="C:cytoplasm"/>
    <property type="evidence" value="ECO:0007669"/>
    <property type="project" value="UniProtKB-SubCell"/>
</dbReference>
<dbReference type="GO" id="GO:0005524">
    <property type="term" value="F:ATP binding"/>
    <property type="evidence" value="ECO:0007669"/>
    <property type="project" value="UniProtKB-UniRule"/>
</dbReference>
<dbReference type="GO" id="GO:0140096">
    <property type="term" value="F:catalytic activity, acting on a protein"/>
    <property type="evidence" value="ECO:0007669"/>
    <property type="project" value="UniProtKB-ARBA"/>
</dbReference>
<dbReference type="GO" id="GO:0004828">
    <property type="term" value="F:serine-tRNA ligase activity"/>
    <property type="evidence" value="ECO:0007669"/>
    <property type="project" value="UniProtKB-UniRule"/>
</dbReference>
<dbReference type="GO" id="GO:0016740">
    <property type="term" value="F:transferase activity"/>
    <property type="evidence" value="ECO:0007669"/>
    <property type="project" value="UniProtKB-ARBA"/>
</dbReference>
<dbReference type="GO" id="GO:0016260">
    <property type="term" value="P:selenocysteine biosynthetic process"/>
    <property type="evidence" value="ECO:0007669"/>
    <property type="project" value="UniProtKB-UniRule"/>
</dbReference>
<dbReference type="GO" id="GO:0006434">
    <property type="term" value="P:seryl-tRNA aminoacylation"/>
    <property type="evidence" value="ECO:0007669"/>
    <property type="project" value="UniProtKB-UniRule"/>
</dbReference>
<dbReference type="CDD" id="cd00770">
    <property type="entry name" value="SerRS_core"/>
    <property type="match status" value="1"/>
</dbReference>
<dbReference type="Gene3D" id="3.30.930.10">
    <property type="entry name" value="Bira Bifunctional Protein, Domain 2"/>
    <property type="match status" value="1"/>
</dbReference>
<dbReference type="Gene3D" id="1.10.287.40">
    <property type="entry name" value="Serine-tRNA synthetase, tRNA binding domain"/>
    <property type="match status" value="1"/>
</dbReference>
<dbReference type="HAMAP" id="MF_00176">
    <property type="entry name" value="Ser_tRNA_synth_type1"/>
    <property type="match status" value="1"/>
</dbReference>
<dbReference type="InterPro" id="IPR002314">
    <property type="entry name" value="aa-tRNA-synt_IIb"/>
</dbReference>
<dbReference type="InterPro" id="IPR006195">
    <property type="entry name" value="aa-tRNA-synth_II"/>
</dbReference>
<dbReference type="InterPro" id="IPR045864">
    <property type="entry name" value="aa-tRNA-synth_II/BPL/LPL"/>
</dbReference>
<dbReference type="InterPro" id="IPR002317">
    <property type="entry name" value="Ser-tRNA-ligase_type_1"/>
</dbReference>
<dbReference type="InterPro" id="IPR015866">
    <property type="entry name" value="Ser-tRNA-synth_1_N"/>
</dbReference>
<dbReference type="InterPro" id="IPR042103">
    <property type="entry name" value="SerRS_1_N_sf"/>
</dbReference>
<dbReference type="InterPro" id="IPR033729">
    <property type="entry name" value="SerRS_core"/>
</dbReference>
<dbReference type="InterPro" id="IPR010978">
    <property type="entry name" value="tRNA-bd_arm"/>
</dbReference>
<dbReference type="NCBIfam" id="TIGR00414">
    <property type="entry name" value="serS"/>
    <property type="match status" value="1"/>
</dbReference>
<dbReference type="PANTHER" id="PTHR43697:SF1">
    <property type="entry name" value="SERINE--TRNA LIGASE"/>
    <property type="match status" value="1"/>
</dbReference>
<dbReference type="PANTHER" id="PTHR43697">
    <property type="entry name" value="SERYL-TRNA SYNTHETASE"/>
    <property type="match status" value="1"/>
</dbReference>
<dbReference type="Pfam" id="PF02403">
    <property type="entry name" value="Seryl_tRNA_N"/>
    <property type="match status" value="1"/>
</dbReference>
<dbReference type="Pfam" id="PF00587">
    <property type="entry name" value="tRNA-synt_2b"/>
    <property type="match status" value="1"/>
</dbReference>
<dbReference type="PIRSF" id="PIRSF001529">
    <property type="entry name" value="Ser-tRNA-synth_IIa"/>
    <property type="match status" value="1"/>
</dbReference>
<dbReference type="PRINTS" id="PR00981">
    <property type="entry name" value="TRNASYNTHSER"/>
</dbReference>
<dbReference type="SUPFAM" id="SSF55681">
    <property type="entry name" value="Class II aaRS and biotin synthetases"/>
    <property type="match status" value="1"/>
</dbReference>
<dbReference type="SUPFAM" id="SSF46589">
    <property type="entry name" value="tRNA-binding arm"/>
    <property type="match status" value="1"/>
</dbReference>
<dbReference type="PROSITE" id="PS50862">
    <property type="entry name" value="AA_TRNA_LIGASE_II"/>
    <property type="match status" value="1"/>
</dbReference>
<sequence length="422" mass="48568">MLDVKYIRNNPDEARKACVQKGEDDHVDEILKYDEQRRKILTDLEVLKNKRNTVSKEIGQLKKEGHDAQDKIAEMKEVSDKVKEMDDELKKVDEQLNYHLLCIPNIPNPDVPVGDDDEDNQVVKQVGEPVKKDYFKPHWEVAENLNLLDFKRAGKVTGTRFVNYVGDAARLERALIDFMIDVHVTEHGYVEMMPPFIANRDSMTGTGQLPKFEDDMYKLEDMEYFLIPTAEVTLTNLYRDEILPGDFLPRYLVAFTPCFRKEAGAHGRDTRGLIRQHQFNKVEMVKFVEPEKSYQELDSLVANAERVLQLLELPYQISLMCTGDLGFAAAKKYDLEVWLPSYDTYREISSCSNFEDFQARRANIRYRPEEGEKARFVHTLNGSGLAVGRTLAAILENYQNPDGTVTIPEVLKPYFNGRDVIS</sequence>
<keyword id="KW-0030">Aminoacyl-tRNA synthetase</keyword>
<keyword id="KW-0067">ATP-binding</keyword>
<keyword id="KW-0963">Cytoplasm</keyword>
<keyword id="KW-0436">Ligase</keyword>
<keyword id="KW-0547">Nucleotide-binding</keyword>
<keyword id="KW-0648">Protein biosynthesis</keyword>
<keyword id="KW-1185">Reference proteome</keyword>